<keyword id="KW-1185">Reference proteome</keyword>
<keyword id="KW-0677">Repeat</keyword>
<proteinExistence type="evidence at transcript level"/>
<protein>
    <recommendedName>
        <fullName>Pentatricopeptide repeat-containing protein At1g22830</fullName>
    </recommendedName>
</protein>
<name>PPR55_ARATH</name>
<dbReference type="EMBL" id="AC003979">
    <property type="protein sequence ID" value="AAC25504.1"/>
    <property type="status" value="ALT_TERM"/>
    <property type="molecule type" value="Genomic_DNA"/>
</dbReference>
<dbReference type="EMBL" id="AF000657">
    <property type="protein sequence ID" value="AAB72176.1"/>
    <property type="status" value="ALT_INIT"/>
    <property type="molecule type" value="Genomic_DNA"/>
</dbReference>
<dbReference type="EMBL" id="CP002684">
    <property type="protein sequence ID" value="AEE30292.1"/>
    <property type="molecule type" value="Genomic_DNA"/>
</dbReference>
<dbReference type="EMBL" id="CP002684">
    <property type="protein sequence ID" value="AEE30293.1"/>
    <property type="molecule type" value="Genomic_DNA"/>
</dbReference>
<dbReference type="EMBL" id="AK176394">
    <property type="protein sequence ID" value="BAD44157.1"/>
    <property type="molecule type" value="mRNA"/>
</dbReference>
<dbReference type="EMBL" id="BT023467">
    <property type="protein sequence ID" value="AAY56458.1"/>
    <property type="molecule type" value="mRNA"/>
</dbReference>
<dbReference type="PIR" id="B86362">
    <property type="entry name" value="B86362"/>
</dbReference>
<dbReference type="PIR" id="T00762">
    <property type="entry name" value="T00762"/>
</dbReference>
<dbReference type="RefSeq" id="NP_001077582.1">
    <property type="nucleotide sequence ID" value="NM_001084113.2"/>
</dbReference>
<dbReference type="RefSeq" id="NP_173696.1">
    <property type="nucleotide sequence ID" value="NM_102129.3"/>
</dbReference>
<dbReference type="SMR" id="Q4V389"/>
<dbReference type="FunCoup" id="Q4V389">
    <property type="interactions" value="842"/>
</dbReference>
<dbReference type="iPTMnet" id="Q4V389"/>
<dbReference type="PaxDb" id="3702-AT1G22830.1"/>
<dbReference type="EnsemblPlants" id="AT1G22830.1">
    <property type="protein sequence ID" value="AT1G22830.1"/>
    <property type="gene ID" value="AT1G22830"/>
</dbReference>
<dbReference type="EnsemblPlants" id="AT1G22830.2">
    <property type="protein sequence ID" value="AT1G22830.2"/>
    <property type="gene ID" value="AT1G22830"/>
</dbReference>
<dbReference type="GeneID" id="838888"/>
<dbReference type="Gramene" id="AT1G22830.1">
    <property type="protein sequence ID" value="AT1G22830.1"/>
    <property type="gene ID" value="AT1G22830"/>
</dbReference>
<dbReference type="Gramene" id="AT1G22830.2">
    <property type="protein sequence ID" value="AT1G22830.2"/>
    <property type="gene ID" value="AT1G22830"/>
</dbReference>
<dbReference type="KEGG" id="ath:AT1G22830"/>
<dbReference type="Araport" id="AT1G22830"/>
<dbReference type="TAIR" id="AT1G22830"/>
<dbReference type="eggNOG" id="KOG4197">
    <property type="taxonomic scope" value="Eukaryota"/>
</dbReference>
<dbReference type="HOGENOM" id="CLU_002706_37_2_1"/>
<dbReference type="InParanoid" id="Q4V389"/>
<dbReference type="OMA" id="CYILRRQ"/>
<dbReference type="PhylomeDB" id="Q4V389"/>
<dbReference type="PRO" id="PR:Q4V389"/>
<dbReference type="Proteomes" id="UP000006548">
    <property type="component" value="Chromosome 1"/>
</dbReference>
<dbReference type="ExpressionAtlas" id="Q4V389">
    <property type="expression patterns" value="baseline and differential"/>
</dbReference>
<dbReference type="GO" id="GO:0003723">
    <property type="term" value="F:RNA binding"/>
    <property type="evidence" value="ECO:0007669"/>
    <property type="project" value="InterPro"/>
</dbReference>
<dbReference type="GO" id="GO:0009451">
    <property type="term" value="P:RNA modification"/>
    <property type="evidence" value="ECO:0007669"/>
    <property type="project" value="InterPro"/>
</dbReference>
<dbReference type="FunFam" id="1.25.40.10:FF:000393">
    <property type="entry name" value="Pentatricopeptide repeat-containing protein At1g20230"/>
    <property type="match status" value="1"/>
</dbReference>
<dbReference type="FunFam" id="1.25.40.10:FF:002170">
    <property type="entry name" value="Pentatricopeptide repeat-containing protein At1g22830"/>
    <property type="match status" value="1"/>
</dbReference>
<dbReference type="FunFam" id="1.25.40.10:FF:002585">
    <property type="entry name" value="Pentatricopeptide repeat-containing protein At1g22830"/>
    <property type="match status" value="1"/>
</dbReference>
<dbReference type="FunFam" id="1.25.40.10:FF:001058">
    <property type="entry name" value="Pentatricopeptide repeat-containing protein chloroplastic"/>
    <property type="match status" value="1"/>
</dbReference>
<dbReference type="Gene3D" id="1.25.40.10">
    <property type="entry name" value="Tetratricopeptide repeat domain"/>
    <property type="match status" value="5"/>
</dbReference>
<dbReference type="InterPro" id="IPR002885">
    <property type="entry name" value="Pentatricopeptide_rpt"/>
</dbReference>
<dbReference type="InterPro" id="IPR046960">
    <property type="entry name" value="PPR_At4g14850-like_plant"/>
</dbReference>
<dbReference type="InterPro" id="IPR011990">
    <property type="entry name" value="TPR-like_helical_dom_sf"/>
</dbReference>
<dbReference type="NCBIfam" id="TIGR00756">
    <property type="entry name" value="PPR"/>
    <property type="match status" value="7"/>
</dbReference>
<dbReference type="PANTHER" id="PTHR47926">
    <property type="entry name" value="PENTATRICOPEPTIDE REPEAT-CONTAINING PROTEIN"/>
    <property type="match status" value="1"/>
</dbReference>
<dbReference type="PANTHER" id="PTHR47926:SF375">
    <property type="entry name" value="PENTATRICOPEPTIDE REPEAT-CONTAINING PROTEIN"/>
    <property type="match status" value="1"/>
</dbReference>
<dbReference type="Pfam" id="PF01535">
    <property type="entry name" value="PPR"/>
    <property type="match status" value="5"/>
</dbReference>
<dbReference type="Pfam" id="PF13041">
    <property type="entry name" value="PPR_2"/>
    <property type="match status" value="3"/>
</dbReference>
<dbReference type="PROSITE" id="PS51375">
    <property type="entry name" value="PPR"/>
    <property type="match status" value="12"/>
</dbReference>
<comment type="similarity">
    <text evidence="2">Belongs to the PPR family. PCMP-E subfamily.</text>
</comment>
<comment type="sequence caution" evidence="2">
    <conflict type="erroneous initiation">
        <sequence resource="EMBL-CDS" id="AAB72176"/>
    </conflict>
</comment>
<comment type="online information" name="Pentatricopeptide repeat proteins">
    <link uri="https://ppr.plantenergy.uwa.edu.au"/>
</comment>
<feature type="chain" id="PRO_0000342796" description="Pentatricopeptide repeat-containing protein At1g22830">
    <location>
        <begin position="1"/>
        <end position="703"/>
    </location>
</feature>
<feature type="repeat" description="PPR 1">
    <location>
        <begin position="82"/>
        <end position="116"/>
    </location>
</feature>
<feature type="repeat" description="PPR 2">
    <location>
        <begin position="117"/>
        <end position="147"/>
    </location>
</feature>
<feature type="repeat" description="PPR 3">
    <location>
        <begin position="148"/>
        <end position="182"/>
    </location>
</feature>
<feature type="repeat" description="PPR 4">
    <location>
        <begin position="183"/>
        <end position="217"/>
    </location>
</feature>
<feature type="repeat" description="PPR 5">
    <location>
        <begin position="218"/>
        <end position="248"/>
    </location>
</feature>
<feature type="repeat" description="PPR 6">
    <location>
        <begin position="249"/>
        <end position="283"/>
    </location>
</feature>
<feature type="repeat" description="PPR 7">
    <location>
        <begin position="284"/>
        <end position="318"/>
    </location>
</feature>
<feature type="repeat" description="PPR 8">
    <location>
        <begin position="319"/>
        <end position="353"/>
    </location>
</feature>
<feature type="repeat" description="PPR 9">
    <location>
        <begin position="356"/>
        <end position="386"/>
    </location>
</feature>
<feature type="repeat" description="PPR 10">
    <location>
        <begin position="387"/>
        <end position="421"/>
    </location>
</feature>
<feature type="repeat" description="PPR 11">
    <location>
        <begin position="422"/>
        <end position="452"/>
    </location>
</feature>
<feature type="repeat" description="PPR 12">
    <location>
        <begin position="458"/>
        <end position="488"/>
    </location>
</feature>
<feature type="repeat" description="PPR 13">
    <location>
        <begin position="489"/>
        <end position="523"/>
    </location>
</feature>
<feature type="repeat" description="PPR 14">
    <location>
        <begin position="524"/>
        <end position="554"/>
    </location>
</feature>
<feature type="repeat" description="PPR 15">
    <location>
        <begin position="560"/>
        <end position="594"/>
    </location>
</feature>
<feature type="region of interest" description="Type E motif">
    <location>
        <begin position="595"/>
        <end position="671"/>
    </location>
</feature>
<feature type="region of interest" description="Disordered" evidence="1">
    <location>
        <begin position="671"/>
        <end position="703"/>
    </location>
</feature>
<feature type="sequence conflict" description="In Ref. 3; BAD44157." evidence="2" ref="3">
    <original>N</original>
    <variation>D</variation>
    <location>
        <position position="679"/>
    </location>
</feature>
<evidence type="ECO:0000256" key="1">
    <source>
        <dbReference type="SAM" id="MobiDB-lite"/>
    </source>
</evidence>
<evidence type="ECO:0000305" key="2"/>
<sequence length="703" mass="79315">MPSSPSRSILRGLTVSEICKFIPQSWKQLPRPISETSKTHDDESVPQVLFNSFRHCISHGQLYEAFRTFSLLRYQSGSHEFVLYSSASLLSTCVGFNEFVPGQQLHAHCISSGLEFDSVLVPKLVTFYSAFNLLDEAQTITENSEILHPLPWNVLIGSYIRNKRFQESVSVYKRMMSKGIRADEFTYPSVIKACAALLDFAYGRVVHGSIEVSSHRCNLYVCNALISMYKRFGKVDVARRLFDRMSERDAVSWNAIINCYTSEEKLGEAFKLLDRMYLSGVEASIVTWNTIAGGCLEAGNYIGALNCVVGMRNCNVRIGSVAMINGLKACSHIGALKWGKVFHCLVIRSCSFSHDIDNVRNSLITMYSRCSDLRHAFIVFQQVEANSLSTWNSIISGFAYNERSEETSFLLKEMLLSGFHPNHITLASILPLFARVGNLQHGKEFHCYILRRQSYKDCLILWNSLVDMYAKSGEIIAAKRVFDSMRKRDKVTYTSLIDGYGRLGKGEVALAWFKDMDRSGIKPDHVTMVAVLSACSHSNLVREGHWLFTKMEHVFGIRLRLEHYSCMVDLYCRAGYLDKARDIFHTIPYEPSSAMCATLLKACLIHGNTNIGEWAADKLLLETKPEHLGHYMLLADMYAVTGSWSKLVTVKTLLSDLGVQKAHEFALMETDSELDGENNKPMNDDSVINQEQSSDEERLVEVG</sequence>
<gene>
    <name type="primary">PCMP-E24</name>
    <name type="ordered locus">At1g22830</name>
    <name type="ORF">F19G10.21</name>
    <name type="ORF">T22J18.1</name>
</gene>
<accession>Q4V389</accession>
<accession>O23139</accession>
<accession>O80541</accession>
<accession>Q67YS4</accession>
<organism>
    <name type="scientific">Arabidopsis thaliana</name>
    <name type="common">Mouse-ear cress</name>
    <dbReference type="NCBI Taxonomy" id="3702"/>
    <lineage>
        <taxon>Eukaryota</taxon>
        <taxon>Viridiplantae</taxon>
        <taxon>Streptophyta</taxon>
        <taxon>Embryophyta</taxon>
        <taxon>Tracheophyta</taxon>
        <taxon>Spermatophyta</taxon>
        <taxon>Magnoliopsida</taxon>
        <taxon>eudicotyledons</taxon>
        <taxon>Gunneridae</taxon>
        <taxon>Pentapetalae</taxon>
        <taxon>rosids</taxon>
        <taxon>malvids</taxon>
        <taxon>Brassicales</taxon>
        <taxon>Brassicaceae</taxon>
        <taxon>Camelineae</taxon>
        <taxon>Arabidopsis</taxon>
    </lineage>
</organism>
<reference key="1">
    <citation type="journal article" date="2000" name="Nature">
        <title>Sequence and analysis of chromosome 1 of the plant Arabidopsis thaliana.</title>
        <authorList>
            <person name="Theologis A."/>
            <person name="Ecker J.R."/>
            <person name="Palm C.J."/>
            <person name="Federspiel N.A."/>
            <person name="Kaul S."/>
            <person name="White O."/>
            <person name="Alonso J."/>
            <person name="Altafi H."/>
            <person name="Araujo R."/>
            <person name="Bowman C.L."/>
            <person name="Brooks S.Y."/>
            <person name="Buehler E."/>
            <person name="Chan A."/>
            <person name="Chao Q."/>
            <person name="Chen H."/>
            <person name="Cheuk R.F."/>
            <person name="Chin C.W."/>
            <person name="Chung M.K."/>
            <person name="Conn L."/>
            <person name="Conway A.B."/>
            <person name="Conway A.R."/>
            <person name="Creasy T.H."/>
            <person name="Dewar K."/>
            <person name="Dunn P."/>
            <person name="Etgu P."/>
            <person name="Feldblyum T.V."/>
            <person name="Feng J.-D."/>
            <person name="Fong B."/>
            <person name="Fujii C.Y."/>
            <person name="Gill J.E."/>
            <person name="Goldsmith A.D."/>
            <person name="Haas B."/>
            <person name="Hansen N.F."/>
            <person name="Hughes B."/>
            <person name="Huizar L."/>
            <person name="Hunter J.L."/>
            <person name="Jenkins J."/>
            <person name="Johnson-Hopson C."/>
            <person name="Khan S."/>
            <person name="Khaykin E."/>
            <person name="Kim C.J."/>
            <person name="Koo H.L."/>
            <person name="Kremenetskaia I."/>
            <person name="Kurtz D.B."/>
            <person name="Kwan A."/>
            <person name="Lam B."/>
            <person name="Langin-Hooper S."/>
            <person name="Lee A."/>
            <person name="Lee J.M."/>
            <person name="Lenz C.A."/>
            <person name="Li J.H."/>
            <person name="Li Y.-P."/>
            <person name="Lin X."/>
            <person name="Liu S.X."/>
            <person name="Liu Z.A."/>
            <person name="Luros J.S."/>
            <person name="Maiti R."/>
            <person name="Marziali A."/>
            <person name="Militscher J."/>
            <person name="Miranda M."/>
            <person name="Nguyen M."/>
            <person name="Nierman W.C."/>
            <person name="Osborne B.I."/>
            <person name="Pai G."/>
            <person name="Peterson J."/>
            <person name="Pham P.K."/>
            <person name="Rizzo M."/>
            <person name="Rooney T."/>
            <person name="Rowley D."/>
            <person name="Sakano H."/>
            <person name="Salzberg S.L."/>
            <person name="Schwartz J.R."/>
            <person name="Shinn P."/>
            <person name="Southwick A.M."/>
            <person name="Sun H."/>
            <person name="Tallon L.J."/>
            <person name="Tambunga G."/>
            <person name="Toriumi M.J."/>
            <person name="Town C.D."/>
            <person name="Utterback T."/>
            <person name="Van Aken S."/>
            <person name="Vaysberg M."/>
            <person name="Vysotskaia V.S."/>
            <person name="Walker M."/>
            <person name="Wu D."/>
            <person name="Yu G."/>
            <person name="Fraser C.M."/>
            <person name="Venter J.C."/>
            <person name="Davis R.W."/>
        </authorList>
    </citation>
    <scope>NUCLEOTIDE SEQUENCE [LARGE SCALE GENOMIC DNA]</scope>
    <source>
        <strain>cv. Columbia</strain>
    </source>
</reference>
<reference key="2">
    <citation type="journal article" date="2017" name="Plant J.">
        <title>Araport11: a complete reannotation of the Arabidopsis thaliana reference genome.</title>
        <authorList>
            <person name="Cheng C.Y."/>
            <person name="Krishnakumar V."/>
            <person name="Chan A.P."/>
            <person name="Thibaud-Nissen F."/>
            <person name="Schobel S."/>
            <person name="Town C.D."/>
        </authorList>
    </citation>
    <scope>GENOME REANNOTATION</scope>
    <source>
        <strain>cv. Columbia</strain>
    </source>
</reference>
<reference key="3">
    <citation type="submission" date="2004-09" db="EMBL/GenBank/DDBJ databases">
        <title>Large-scale analysis of RIKEN Arabidopsis full-length (RAFL) cDNAs.</title>
        <authorList>
            <person name="Totoki Y."/>
            <person name="Seki M."/>
            <person name="Ishida J."/>
            <person name="Nakajima M."/>
            <person name="Enju A."/>
            <person name="Kamiya A."/>
            <person name="Narusaka M."/>
            <person name="Shin-i T."/>
            <person name="Nakagawa M."/>
            <person name="Sakamoto N."/>
            <person name="Oishi K."/>
            <person name="Kohara Y."/>
            <person name="Kobayashi M."/>
            <person name="Toyoda A."/>
            <person name="Sakaki Y."/>
            <person name="Sakurai T."/>
            <person name="Iida K."/>
            <person name="Akiyama K."/>
            <person name="Satou M."/>
            <person name="Toyoda T."/>
            <person name="Konagaya A."/>
            <person name="Carninci P."/>
            <person name="Kawai J."/>
            <person name="Hayashizaki Y."/>
            <person name="Shinozaki K."/>
        </authorList>
    </citation>
    <scope>NUCLEOTIDE SEQUENCE [LARGE SCALE MRNA]</scope>
    <source>
        <strain>cv. Columbia</strain>
    </source>
</reference>
<reference key="4">
    <citation type="submission" date="2005-05" db="EMBL/GenBank/DDBJ databases">
        <title>Arabidopsis ORF clones.</title>
        <authorList>
            <person name="Cheuk R.F."/>
            <person name="Chen H."/>
            <person name="Kim C.J."/>
            <person name="Shinn P."/>
            <person name="Ecker J.R."/>
        </authorList>
    </citation>
    <scope>NUCLEOTIDE SEQUENCE [LARGE SCALE MRNA]</scope>
    <source>
        <strain>cv. Columbia</strain>
    </source>
</reference>
<reference key="5">
    <citation type="journal article" date="2000" name="Plant Mol. Biol.">
        <title>In Arabidopsis thaliana, 1% of the genome codes for a novel protein family unique to plants.</title>
        <authorList>
            <person name="Aubourg S."/>
            <person name="Boudet N."/>
            <person name="Kreis M."/>
            <person name="Lecharny A."/>
        </authorList>
    </citation>
    <scope>GENE FAMILY</scope>
</reference>
<reference key="6">
    <citation type="journal article" date="2004" name="Plant Cell">
        <title>Genome-wide analysis of Arabidopsis pentatricopeptide repeat proteins reveals their essential role in organelle biogenesis.</title>
        <authorList>
            <person name="Lurin C."/>
            <person name="Andres C."/>
            <person name="Aubourg S."/>
            <person name="Bellaoui M."/>
            <person name="Bitton F."/>
            <person name="Bruyere C."/>
            <person name="Caboche M."/>
            <person name="Debast C."/>
            <person name="Gualberto J."/>
            <person name="Hoffmann B."/>
            <person name="Lecharny A."/>
            <person name="Le Ret M."/>
            <person name="Martin-Magniette M.-L."/>
            <person name="Mireau H."/>
            <person name="Peeters N."/>
            <person name="Renou J.-P."/>
            <person name="Szurek B."/>
            <person name="Taconnat L."/>
            <person name="Small I."/>
        </authorList>
    </citation>
    <scope>GENE FAMILY</scope>
</reference>